<protein>
    <recommendedName>
        <fullName evidence="1">Small ribosomal subunit protein uS2</fullName>
    </recommendedName>
    <alternativeName>
        <fullName evidence="2">30S ribosomal protein S2</fullName>
    </alternativeName>
</protein>
<accession>Q71Z11</accession>
<sequence length="249" mass="28375">MPVISMKQLLEAGVHFGHQTRRWNPKMKKYIFTERNGIYIIDLQKTVKKVDEAFNFMREVASDNGTILFVGTKKQAQESVRDEAIRSGQYFVNHRWLGGTLTNFETIQKRIQHLKKIERMEADGTFEVLPKKEVVLLKKEQEKLERFLGGIKDMKGLPDALFIVDPRKERIAVAEARKLHIPIIGIVDTNCDPDEIDYVIPANDDAIRAVKLLTAKMADAIIEVNQGEELTEAEVAPVEEKATEETTEA</sequence>
<evidence type="ECO:0000255" key="1">
    <source>
        <dbReference type="HAMAP-Rule" id="MF_00291"/>
    </source>
</evidence>
<evidence type="ECO:0000305" key="2"/>
<organism>
    <name type="scientific">Listeria monocytogenes serotype 4b (strain F2365)</name>
    <dbReference type="NCBI Taxonomy" id="265669"/>
    <lineage>
        <taxon>Bacteria</taxon>
        <taxon>Bacillati</taxon>
        <taxon>Bacillota</taxon>
        <taxon>Bacilli</taxon>
        <taxon>Bacillales</taxon>
        <taxon>Listeriaceae</taxon>
        <taxon>Listeria</taxon>
    </lineage>
</organism>
<proteinExistence type="inferred from homology"/>
<gene>
    <name evidence="1" type="primary">rpsB</name>
    <name type="ordered locus">LMOf2365_1679</name>
</gene>
<keyword id="KW-0687">Ribonucleoprotein</keyword>
<keyword id="KW-0689">Ribosomal protein</keyword>
<feature type="chain" id="PRO_0000134191" description="Small ribosomal subunit protein uS2">
    <location>
        <begin position="1"/>
        <end position="249"/>
    </location>
</feature>
<comment type="similarity">
    <text evidence="1">Belongs to the universal ribosomal protein uS2 family.</text>
</comment>
<reference key="1">
    <citation type="journal article" date="2004" name="Nucleic Acids Res.">
        <title>Whole genome comparisons of serotype 4b and 1/2a strains of the food-borne pathogen Listeria monocytogenes reveal new insights into the core genome components of this species.</title>
        <authorList>
            <person name="Nelson K.E."/>
            <person name="Fouts D.E."/>
            <person name="Mongodin E.F."/>
            <person name="Ravel J."/>
            <person name="DeBoy R.T."/>
            <person name="Kolonay J.F."/>
            <person name="Rasko D.A."/>
            <person name="Angiuoli S.V."/>
            <person name="Gill S.R."/>
            <person name="Paulsen I.T."/>
            <person name="Peterson J.D."/>
            <person name="White O."/>
            <person name="Nelson W.C."/>
            <person name="Nierman W.C."/>
            <person name="Beanan M.J."/>
            <person name="Brinkac L.M."/>
            <person name="Daugherty S.C."/>
            <person name="Dodson R.J."/>
            <person name="Durkin A.S."/>
            <person name="Madupu R."/>
            <person name="Haft D.H."/>
            <person name="Selengut J."/>
            <person name="Van Aken S.E."/>
            <person name="Khouri H.M."/>
            <person name="Fedorova N."/>
            <person name="Forberger H.A."/>
            <person name="Tran B."/>
            <person name="Kathariou S."/>
            <person name="Wonderling L.D."/>
            <person name="Uhlich G.A."/>
            <person name="Bayles D.O."/>
            <person name="Luchansky J.B."/>
            <person name="Fraser C.M."/>
        </authorList>
    </citation>
    <scope>NUCLEOTIDE SEQUENCE [LARGE SCALE GENOMIC DNA]</scope>
    <source>
        <strain>F2365</strain>
    </source>
</reference>
<dbReference type="EMBL" id="AE017262">
    <property type="protein sequence ID" value="AAT04453.1"/>
    <property type="molecule type" value="Genomic_DNA"/>
</dbReference>
<dbReference type="RefSeq" id="WP_003723971.1">
    <property type="nucleotide sequence ID" value="NC_002973.6"/>
</dbReference>
<dbReference type="SMR" id="Q71Z11"/>
<dbReference type="GeneID" id="93239536"/>
<dbReference type="KEGG" id="lmf:LMOf2365_1679"/>
<dbReference type="HOGENOM" id="CLU_040318_1_2_9"/>
<dbReference type="GO" id="GO:0022627">
    <property type="term" value="C:cytosolic small ribosomal subunit"/>
    <property type="evidence" value="ECO:0007669"/>
    <property type="project" value="TreeGrafter"/>
</dbReference>
<dbReference type="GO" id="GO:0003735">
    <property type="term" value="F:structural constituent of ribosome"/>
    <property type="evidence" value="ECO:0007669"/>
    <property type="project" value="InterPro"/>
</dbReference>
<dbReference type="GO" id="GO:0006412">
    <property type="term" value="P:translation"/>
    <property type="evidence" value="ECO:0007669"/>
    <property type="project" value="UniProtKB-UniRule"/>
</dbReference>
<dbReference type="CDD" id="cd01425">
    <property type="entry name" value="RPS2"/>
    <property type="match status" value="1"/>
</dbReference>
<dbReference type="FunFam" id="1.10.287.610:FF:000001">
    <property type="entry name" value="30S ribosomal protein S2"/>
    <property type="match status" value="1"/>
</dbReference>
<dbReference type="Gene3D" id="3.40.50.10490">
    <property type="entry name" value="Glucose-6-phosphate isomerase like protein, domain 1"/>
    <property type="match status" value="1"/>
</dbReference>
<dbReference type="Gene3D" id="1.10.287.610">
    <property type="entry name" value="Helix hairpin bin"/>
    <property type="match status" value="1"/>
</dbReference>
<dbReference type="HAMAP" id="MF_00291_B">
    <property type="entry name" value="Ribosomal_uS2_B"/>
    <property type="match status" value="1"/>
</dbReference>
<dbReference type="InterPro" id="IPR001865">
    <property type="entry name" value="Ribosomal_uS2"/>
</dbReference>
<dbReference type="InterPro" id="IPR005706">
    <property type="entry name" value="Ribosomal_uS2_bac/mit/plastid"/>
</dbReference>
<dbReference type="InterPro" id="IPR018130">
    <property type="entry name" value="Ribosomal_uS2_CS"/>
</dbReference>
<dbReference type="InterPro" id="IPR023591">
    <property type="entry name" value="Ribosomal_uS2_flav_dom_sf"/>
</dbReference>
<dbReference type="NCBIfam" id="TIGR01011">
    <property type="entry name" value="rpsB_bact"/>
    <property type="match status" value="1"/>
</dbReference>
<dbReference type="PANTHER" id="PTHR12534">
    <property type="entry name" value="30S RIBOSOMAL PROTEIN S2 PROKARYOTIC AND ORGANELLAR"/>
    <property type="match status" value="1"/>
</dbReference>
<dbReference type="PANTHER" id="PTHR12534:SF0">
    <property type="entry name" value="SMALL RIBOSOMAL SUBUNIT PROTEIN US2M"/>
    <property type="match status" value="1"/>
</dbReference>
<dbReference type="Pfam" id="PF00318">
    <property type="entry name" value="Ribosomal_S2"/>
    <property type="match status" value="1"/>
</dbReference>
<dbReference type="PRINTS" id="PR00395">
    <property type="entry name" value="RIBOSOMALS2"/>
</dbReference>
<dbReference type="SUPFAM" id="SSF52313">
    <property type="entry name" value="Ribosomal protein S2"/>
    <property type="match status" value="1"/>
</dbReference>
<dbReference type="PROSITE" id="PS00962">
    <property type="entry name" value="RIBOSOMAL_S2_1"/>
    <property type="match status" value="1"/>
</dbReference>
<dbReference type="PROSITE" id="PS00963">
    <property type="entry name" value="RIBOSOMAL_S2_2"/>
    <property type="match status" value="1"/>
</dbReference>
<name>RS2_LISMF</name>